<feature type="chain" id="PRO_0000383836" description="Hydroxyethylthiazole kinase">
    <location>
        <begin position="1"/>
        <end position="275"/>
    </location>
</feature>
<feature type="binding site" evidence="1">
    <location>
        <position position="57"/>
    </location>
    <ligand>
        <name>substrate</name>
    </ligand>
</feature>
<feature type="binding site" evidence="1">
    <location>
        <position position="132"/>
    </location>
    <ligand>
        <name>ATP</name>
        <dbReference type="ChEBI" id="CHEBI:30616"/>
    </ligand>
</feature>
<feature type="binding site" evidence="1">
    <location>
        <position position="178"/>
    </location>
    <ligand>
        <name>ATP</name>
        <dbReference type="ChEBI" id="CHEBI:30616"/>
    </ligand>
</feature>
<feature type="binding site" evidence="1">
    <location>
        <position position="205"/>
    </location>
    <ligand>
        <name>substrate</name>
    </ligand>
</feature>
<keyword id="KW-0067">ATP-binding</keyword>
<keyword id="KW-0418">Kinase</keyword>
<keyword id="KW-0460">Magnesium</keyword>
<keyword id="KW-0479">Metal-binding</keyword>
<keyword id="KW-0547">Nucleotide-binding</keyword>
<keyword id="KW-0784">Thiamine biosynthesis</keyword>
<keyword id="KW-0808">Transferase</keyword>
<protein>
    <recommendedName>
        <fullName evidence="1">Hydroxyethylthiazole kinase</fullName>
        <ecNumber evidence="1">2.7.1.50</ecNumber>
    </recommendedName>
    <alternativeName>
        <fullName evidence="1">4-methyl-5-beta-hydroxyethylthiazole kinase</fullName>
        <shortName evidence="1">TH kinase</shortName>
        <shortName evidence="1">Thz kinase</shortName>
    </alternativeName>
</protein>
<gene>
    <name evidence="1" type="primary">thiM</name>
    <name type="ordered locus">CMS1103</name>
</gene>
<evidence type="ECO:0000255" key="1">
    <source>
        <dbReference type="HAMAP-Rule" id="MF_00228"/>
    </source>
</evidence>
<sequence length="275" mass="27673">MSALRPSTGTITRGTPTSADLLLQLRERQPLVQCITNAVVTGFTANVLLALGAAPAMTDVPTESGPFARIASGVLINLGTPHAEQREAAVEAAHAARDAGTPWVLDPVAVGALPVRTRLAHELVALSPTIVRGNASEIIALATGGAGGRGVDATDEVEAALDAASLLARTYGTVVAVSGAVDHITDGHRLVRVHTGDAWLTKVTGGGCALGAVMTAFASTDPDPLRAAVAATSGYTIAADIAAEGARGPGSFAVGLLDALDAVTPELVAQSERLS</sequence>
<proteinExistence type="inferred from homology"/>
<accession>B0RGG4</accession>
<dbReference type="EC" id="2.7.1.50" evidence="1"/>
<dbReference type="EMBL" id="AM849034">
    <property type="protein sequence ID" value="CAQ01221.1"/>
    <property type="molecule type" value="Genomic_DNA"/>
</dbReference>
<dbReference type="SMR" id="B0RGG4"/>
<dbReference type="STRING" id="31964.CMS1103"/>
<dbReference type="KEGG" id="cms:CMS1103"/>
<dbReference type="eggNOG" id="COG2145">
    <property type="taxonomic scope" value="Bacteria"/>
</dbReference>
<dbReference type="HOGENOM" id="CLU_019943_0_1_11"/>
<dbReference type="OrthoDB" id="8909021at2"/>
<dbReference type="UniPathway" id="UPA00060">
    <property type="reaction ID" value="UER00139"/>
</dbReference>
<dbReference type="Proteomes" id="UP000001318">
    <property type="component" value="Chromosome"/>
</dbReference>
<dbReference type="GO" id="GO:0005524">
    <property type="term" value="F:ATP binding"/>
    <property type="evidence" value="ECO:0007669"/>
    <property type="project" value="UniProtKB-UniRule"/>
</dbReference>
<dbReference type="GO" id="GO:0004417">
    <property type="term" value="F:hydroxyethylthiazole kinase activity"/>
    <property type="evidence" value="ECO:0007669"/>
    <property type="project" value="UniProtKB-UniRule"/>
</dbReference>
<dbReference type="GO" id="GO:0000287">
    <property type="term" value="F:magnesium ion binding"/>
    <property type="evidence" value="ECO:0007669"/>
    <property type="project" value="UniProtKB-UniRule"/>
</dbReference>
<dbReference type="GO" id="GO:0009228">
    <property type="term" value="P:thiamine biosynthetic process"/>
    <property type="evidence" value="ECO:0007669"/>
    <property type="project" value="UniProtKB-KW"/>
</dbReference>
<dbReference type="GO" id="GO:0009229">
    <property type="term" value="P:thiamine diphosphate biosynthetic process"/>
    <property type="evidence" value="ECO:0007669"/>
    <property type="project" value="UniProtKB-UniRule"/>
</dbReference>
<dbReference type="CDD" id="cd01170">
    <property type="entry name" value="THZ_kinase"/>
    <property type="match status" value="1"/>
</dbReference>
<dbReference type="Gene3D" id="3.40.1190.20">
    <property type="match status" value="1"/>
</dbReference>
<dbReference type="HAMAP" id="MF_00228">
    <property type="entry name" value="Thz_kinase"/>
    <property type="match status" value="1"/>
</dbReference>
<dbReference type="InterPro" id="IPR000417">
    <property type="entry name" value="Hyethyz_kinase"/>
</dbReference>
<dbReference type="InterPro" id="IPR029056">
    <property type="entry name" value="Ribokinase-like"/>
</dbReference>
<dbReference type="NCBIfam" id="NF006830">
    <property type="entry name" value="PRK09355.1"/>
    <property type="match status" value="1"/>
</dbReference>
<dbReference type="NCBIfam" id="TIGR00694">
    <property type="entry name" value="thiM"/>
    <property type="match status" value="1"/>
</dbReference>
<dbReference type="Pfam" id="PF02110">
    <property type="entry name" value="HK"/>
    <property type="match status" value="1"/>
</dbReference>
<dbReference type="PIRSF" id="PIRSF000513">
    <property type="entry name" value="Thz_kinase"/>
    <property type="match status" value="1"/>
</dbReference>
<dbReference type="PRINTS" id="PR01099">
    <property type="entry name" value="HYETHTZKNASE"/>
</dbReference>
<dbReference type="SUPFAM" id="SSF53613">
    <property type="entry name" value="Ribokinase-like"/>
    <property type="match status" value="1"/>
</dbReference>
<name>THIM_CLASE</name>
<reference key="1">
    <citation type="journal article" date="2008" name="J. Bacteriol.">
        <title>Genome of the actinomycete plant pathogen Clavibacter michiganensis subsp. sepedonicus suggests recent niche adaptation.</title>
        <authorList>
            <person name="Bentley S.D."/>
            <person name="Corton C."/>
            <person name="Brown S.E."/>
            <person name="Barron A."/>
            <person name="Clark L."/>
            <person name="Doggett J."/>
            <person name="Harris B."/>
            <person name="Ormond D."/>
            <person name="Quail M.A."/>
            <person name="May G."/>
            <person name="Francis D."/>
            <person name="Knudson D."/>
            <person name="Parkhill J."/>
            <person name="Ishimaru C.A."/>
        </authorList>
    </citation>
    <scope>NUCLEOTIDE SEQUENCE [LARGE SCALE GENOMIC DNA]</scope>
    <source>
        <strain>ATCC 33113 / DSM 20744 / JCM 9667 / LMG 2889 / ICMP 2535 / C-1</strain>
    </source>
</reference>
<organism>
    <name type="scientific">Clavibacter sepedonicus</name>
    <name type="common">Clavibacter michiganensis subsp. sepedonicus</name>
    <dbReference type="NCBI Taxonomy" id="31964"/>
    <lineage>
        <taxon>Bacteria</taxon>
        <taxon>Bacillati</taxon>
        <taxon>Actinomycetota</taxon>
        <taxon>Actinomycetes</taxon>
        <taxon>Micrococcales</taxon>
        <taxon>Microbacteriaceae</taxon>
        <taxon>Clavibacter</taxon>
    </lineage>
</organism>
<comment type="function">
    <text evidence="1">Catalyzes the phosphorylation of the hydroxyl group of 4-methyl-5-beta-hydroxyethylthiazole (THZ).</text>
</comment>
<comment type="catalytic activity">
    <reaction evidence="1">
        <text>5-(2-hydroxyethyl)-4-methylthiazole + ATP = 4-methyl-5-(2-phosphooxyethyl)-thiazole + ADP + H(+)</text>
        <dbReference type="Rhea" id="RHEA:24212"/>
        <dbReference type="ChEBI" id="CHEBI:15378"/>
        <dbReference type="ChEBI" id="CHEBI:17957"/>
        <dbReference type="ChEBI" id="CHEBI:30616"/>
        <dbReference type="ChEBI" id="CHEBI:58296"/>
        <dbReference type="ChEBI" id="CHEBI:456216"/>
        <dbReference type="EC" id="2.7.1.50"/>
    </reaction>
</comment>
<comment type="cofactor">
    <cofactor evidence="1">
        <name>Mg(2+)</name>
        <dbReference type="ChEBI" id="CHEBI:18420"/>
    </cofactor>
</comment>
<comment type="pathway">
    <text evidence="1">Cofactor biosynthesis; thiamine diphosphate biosynthesis; 4-methyl-5-(2-phosphoethyl)-thiazole from 5-(2-hydroxyethyl)-4-methylthiazole: step 1/1.</text>
</comment>
<comment type="similarity">
    <text evidence="1">Belongs to the Thz kinase family.</text>
</comment>